<keyword id="KW-0227">DNA damage</keyword>
<keyword id="KW-0234">DNA repair</keyword>
<keyword id="KW-0238">DNA-binding</keyword>
<keyword id="KW-0326">Glycosidase</keyword>
<keyword id="KW-0378">Hydrolase</keyword>
<keyword id="KW-0456">Lyase</keyword>
<keyword id="KW-0479">Metal-binding</keyword>
<keyword id="KW-0511">Multifunctional enzyme</keyword>
<keyword id="KW-1185">Reference proteome</keyword>
<keyword id="KW-0862">Zinc</keyword>
<keyword id="KW-0863">Zinc-finger</keyword>
<feature type="initiator methionine" description="Removed" evidence="1">
    <location>
        <position position="1"/>
    </location>
</feature>
<feature type="chain" id="PRO_0000170820" description="Formamidopyrimidine-DNA glycosylase">
    <location>
        <begin position="2"/>
        <end position="286"/>
    </location>
</feature>
<feature type="zinc finger region" description="FPG-type" evidence="2">
    <location>
        <begin position="250"/>
        <end position="284"/>
    </location>
</feature>
<feature type="active site" description="Schiff-base intermediate with DNA" evidence="2">
    <location>
        <position position="2"/>
    </location>
</feature>
<feature type="active site" description="Proton donor" evidence="2">
    <location>
        <position position="3"/>
    </location>
</feature>
<feature type="active site" description="Proton donor; for beta-elimination activity" evidence="2">
    <location>
        <position position="61"/>
    </location>
</feature>
<feature type="active site" description="Proton donor; for delta-elimination activity" evidence="2">
    <location>
        <position position="274"/>
    </location>
</feature>
<feature type="binding site" evidence="2">
    <location>
        <position position="103"/>
    </location>
    <ligand>
        <name>DNA</name>
        <dbReference type="ChEBI" id="CHEBI:16991"/>
    </ligand>
</feature>
<feature type="binding site" evidence="2">
    <location>
        <position position="122"/>
    </location>
    <ligand>
        <name>DNA</name>
        <dbReference type="ChEBI" id="CHEBI:16991"/>
    </ligand>
</feature>
<feature type="binding site" evidence="2">
    <location>
        <position position="164"/>
    </location>
    <ligand>
        <name>DNA</name>
        <dbReference type="ChEBI" id="CHEBI:16991"/>
    </ligand>
</feature>
<gene>
    <name evidence="2" type="primary">mutM</name>
    <name evidence="2" type="synonym">fpg</name>
    <name type="ordered locus">Cgl2073</name>
    <name type="ordered locus">cg2272</name>
</gene>
<name>FPG_CORGL</name>
<sequence>MPELPEVEVVRRGLEDHMVGHTIVSATVLHPRAARNQLGGGPEIEANIAGLRVSAAKRRGKFLWLELIDAPSGETRPDLGLLVHLGMSGQMLIKEPDAPISPHLRAKVELDNGDEVWFVDQRTFGYWWLGDLVDGVPERVSHIATDVLDESADFSAIARNLKSRKSEIKRLLLNQEIVSGIGNIYADEMLWQAKIHPLQRADRLSLARLEELLQAGKDVMTKALAQGGTSFDALYVNVNGNSGYFALSLNAYAQTGEPCGRCGTLIIRESFMNRGSHYCPNCQKRR</sequence>
<organism>
    <name type="scientific">Corynebacterium glutamicum (strain ATCC 13032 / DSM 20300 / JCM 1318 / BCRC 11384 / CCUG 27702 / LMG 3730 / NBRC 12168 / NCIMB 10025 / NRRL B-2784 / 534)</name>
    <dbReference type="NCBI Taxonomy" id="196627"/>
    <lineage>
        <taxon>Bacteria</taxon>
        <taxon>Bacillati</taxon>
        <taxon>Actinomycetota</taxon>
        <taxon>Actinomycetes</taxon>
        <taxon>Mycobacteriales</taxon>
        <taxon>Corynebacteriaceae</taxon>
        <taxon>Corynebacterium</taxon>
    </lineage>
</organism>
<evidence type="ECO:0000250" key="1"/>
<evidence type="ECO:0000255" key="2">
    <source>
        <dbReference type="HAMAP-Rule" id="MF_00103"/>
    </source>
</evidence>
<evidence type="ECO:0000305" key="3"/>
<comment type="function">
    <text evidence="2">Involved in base excision repair of DNA damaged by oxidation or by mutagenic agents. Acts as a DNA glycosylase that recognizes and removes damaged bases. Has a preference for oxidized purines, such as 7,8-dihydro-8-oxoguanine (8-oxoG). Has AP (apurinic/apyrimidinic) lyase activity and introduces nicks in the DNA strand. Cleaves the DNA backbone by beta-delta elimination to generate a single-strand break at the site of the removed base with both 3'- and 5'-phosphates.</text>
</comment>
<comment type="catalytic activity">
    <reaction evidence="2">
        <text>Hydrolysis of DNA containing ring-opened 7-methylguanine residues, releasing 2,6-diamino-4-hydroxy-5-(N-methyl)formamidopyrimidine.</text>
        <dbReference type="EC" id="3.2.2.23"/>
    </reaction>
</comment>
<comment type="catalytic activity">
    <reaction evidence="2">
        <text>2'-deoxyribonucleotide-(2'-deoxyribose 5'-phosphate)-2'-deoxyribonucleotide-DNA = a 3'-end 2'-deoxyribonucleotide-(2,3-dehydro-2,3-deoxyribose 5'-phosphate)-DNA + a 5'-end 5'-phospho-2'-deoxyribonucleoside-DNA + H(+)</text>
        <dbReference type="Rhea" id="RHEA:66592"/>
        <dbReference type="Rhea" id="RHEA-COMP:13180"/>
        <dbReference type="Rhea" id="RHEA-COMP:16897"/>
        <dbReference type="Rhea" id="RHEA-COMP:17067"/>
        <dbReference type="ChEBI" id="CHEBI:15378"/>
        <dbReference type="ChEBI" id="CHEBI:136412"/>
        <dbReference type="ChEBI" id="CHEBI:157695"/>
        <dbReference type="ChEBI" id="CHEBI:167181"/>
        <dbReference type="EC" id="4.2.99.18"/>
    </reaction>
</comment>
<comment type="cofactor">
    <cofactor evidence="2">
        <name>Zn(2+)</name>
        <dbReference type="ChEBI" id="CHEBI:29105"/>
    </cofactor>
    <text evidence="2">Binds 1 zinc ion per subunit.</text>
</comment>
<comment type="subunit">
    <text evidence="2">Monomer.</text>
</comment>
<comment type="similarity">
    <text evidence="2">Belongs to the FPG family.</text>
</comment>
<comment type="sequence caution" evidence="3">
    <conflict type="erroneous initiation">
        <sequence resource="EMBL-CDS" id="CAF20409"/>
    </conflict>
</comment>
<protein>
    <recommendedName>
        <fullName evidence="2">Formamidopyrimidine-DNA glycosylase</fullName>
        <shortName evidence="2">Fapy-DNA glycosylase</shortName>
        <ecNumber evidence="2">3.2.2.23</ecNumber>
    </recommendedName>
    <alternativeName>
        <fullName evidence="2">DNA-(apurinic or apyrimidinic site) lyase MutM</fullName>
        <shortName evidence="2">AP lyase MutM</shortName>
        <ecNumber evidence="2">4.2.99.18</ecNumber>
    </alternativeName>
</protein>
<dbReference type="EC" id="3.2.2.23" evidence="2"/>
<dbReference type="EC" id="4.2.99.18" evidence="2"/>
<dbReference type="EMBL" id="BA000036">
    <property type="protein sequence ID" value="BAB99466.1"/>
    <property type="molecule type" value="Genomic_DNA"/>
</dbReference>
<dbReference type="EMBL" id="BX927154">
    <property type="protein sequence ID" value="CAF20409.1"/>
    <property type="status" value="ALT_INIT"/>
    <property type="molecule type" value="Genomic_DNA"/>
</dbReference>
<dbReference type="RefSeq" id="NP_601273.1">
    <property type="nucleotide sequence ID" value="NC_003450.3"/>
</dbReference>
<dbReference type="RefSeq" id="WP_011014863.1">
    <property type="nucleotide sequence ID" value="NC_006958.1"/>
</dbReference>
<dbReference type="SMR" id="Q8NNV7"/>
<dbReference type="STRING" id="196627.cg2272"/>
<dbReference type="GeneID" id="1020025"/>
<dbReference type="KEGG" id="cgb:cg2272"/>
<dbReference type="KEGG" id="cgl:Cgl2073"/>
<dbReference type="PATRIC" id="fig|196627.13.peg.2009"/>
<dbReference type="eggNOG" id="COG0266">
    <property type="taxonomic scope" value="Bacteria"/>
</dbReference>
<dbReference type="HOGENOM" id="CLU_038423_1_2_11"/>
<dbReference type="OrthoDB" id="9800855at2"/>
<dbReference type="BioCyc" id="CORYNE:G18NG-11665-MONOMER"/>
<dbReference type="Proteomes" id="UP000000582">
    <property type="component" value="Chromosome"/>
</dbReference>
<dbReference type="Proteomes" id="UP000001009">
    <property type="component" value="Chromosome"/>
</dbReference>
<dbReference type="GO" id="GO:0034039">
    <property type="term" value="F:8-oxo-7,8-dihydroguanine DNA N-glycosylase activity"/>
    <property type="evidence" value="ECO:0007669"/>
    <property type="project" value="TreeGrafter"/>
</dbReference>
<dbReference type="GO" id="GO:0140078">
    <property type="term" value="F:class I DNA-(apurinic or apyrimidinic site) endonuclease activity"/>
    <property type="evidence" value="ECO:0007669"/>
    <property type="project" value="UniProtKB-EC"/>
</dbReference>
<dbReference type="GO" id="GO:0003684">
    <property type="term" value="F:damaged DNA binding"/>
    <property type="evidence" value="ECO:0007669"/>
    <property type="project" value="InterPro"/>
</dbReference>
<dbReference type="GO" id="GO:0008270">
    <property type="term" value="F:zinc ion binding"/>
    <property type="evidence" value="ECO:0007669"/>
    <property type="project" value="UniProtKB-UniRule"/>
</dbReference>
<dbReference type="GO" id="GO:0006284">
    <property type="term" value="P:base-excision repair"/>
    <property type="evidence" value="ECO:0007669"/>
    <property type="project" value="InterPro"/>
</dbReference>
<dbReference type="CDD" id="cd08966">
    <property type="entry name" value="EcFpg-like_N"/>
    <property type="match status" value="1"/>
</dbReference>
<dbReference type="FunFam" id="1.10.8.50:FF:000003">
    <property type="entry name" value="Formamidopyrimidine-DNA glycosylase"/>
    <property type="match status" value="1"/>
</dbReference>
<dbReference type="Gene3D" id="1.10.8.50">
    <property type="match status" value="1"/>
</dbReference>
<dbReference type="Gene3D" id="3.20.190.10">
    <property type="entry name" value="MutM-like, N-terminal"/>
    <property type="match status" value="1"/>
</dbReference>
<dbReference type="HAMAP" id="MF_00103">
    <property type="entry name" value="Fapy_DNA_glycosyl"/>
    <property type="match status" value="1"/>
</dbReference>
<dbReference type="InterPro" id="IPR015886">
    <property type="entry name" value="DNA_glyclase/AP_lyase_DNA-bd"/>
</dbReference>
<dbReference type="InterPro" id="IPR015887">
    <property type="entry name" value="DNA_glyclase_Znf_dom_DNA_BS"/>
</dbReference>
<dbReference type="InterPro" id="IPR020629">
    <property type="entry name" value="Formamido-pyr_DNA_Glyclase"/>
</dbReference>
<dbReference type="InterPro" id="IPR012319">
    <property type="entry name" value="FPG_cat"/>
</dbReference>
<dbReference type="InterPro" id="IPR035937">
    <property type="entry name" value="MutM-like_N-ter"/>
</dbReference>
<dbReference type="InterPro" id="IPR010979">
    <property type="entry name" value="Ribosomal_uS13-like_H2TH"/>
</dbReference>
<dbReference type="InterPro" id="IPR000214">
    <property type="entry name" value="Znf_DNA_glyclase/AP_lyase"/>
</dbReference>
<dbReference type="InterPro" id="IPR010663">
    <property type="entry name" value="Znf_FPG/IleRS"/>
</dbReference>
<dbReference type="NCBIfam" id="TIGR00577">
    <property type="entry name" value="fpg"/>
    <property type="match status" value="1"/>
</dbReference>
<dbReference type="NCBIfam" id="NF002211">
    <property type="entry name" value="PRK01103.1"/>
    <property type="match status" value="1"/>
</dbReference>
<dbReference type="PANTHER" id="PTHR22993">
    <property type="entry name" value="FORMAMIDOPYRIMIDINE-DNA GLYCOSYLASE"/>
    <property type="match status" value="1"/>
</dbReference>
<dbReference type="PANTHER" id="PTHR22993:SF9">
    <property type="entry name" value="FORMAMIDOPYRIMIDINE-DNA GLYCOSYLASE"/>
    <property type="match status" value="1"/>
</dbReference>
<dbReference type="Pfam" id="PF01149">
    <property type="entry name" value="Fapy_DNA_glyco"/>
    <property type="match status" value="1"/>
</dbReference>
<dbReference type="Pfam" id="PF06831">
    <property type="entry name" value="H2TH"/>
    <property type="match status" value="1"/>
</dbReference>
<dbReference type="Pfam" id="PF06827">
    <property type="entry name" value="zf-FPG_IleRS"/>
    <property type="match status" value="1"/>
</dbReference>
<dbReference type="SMART" id="SM00898">
    <property type="entry name" value="Fapy_DNA_glyco"/>
    <property type="match status" value="1"/>
</dbReference>
<dbReference type="SMART" id="SM01232">
    <property type="entry name" value="H2TH"/>
    <property type="match status" value="1"/>
</dbReference>
<dbReference type="SUPFAM" id="SSF57716">
    <property type="entry name" value="Glucocorticoid receptor-like (DNA-binding domain)"/>
    <property type="match status" value="1"/>
</dbReference>
<dbReference type="SUPFAM" id="SSF81624">
    <property type="entry name" value="N-terminal domain of MutM-like DNA repair proteins"/>
    <property type="match status" value="1"/>
</dbReference>
<dbReference type="SUPFAM" id="SSF46946">
    <property type="entry name" value="S13-like H2TH domain"/>
    <property type="match status" value="1"/>
</dbReference>
<dbReference type="PROSITE" id="PS51068">
    <property type="entry name" value="FPG_CAT"/>
    <property type="match status" value="1"/>
</dbReference>
<dbReference type="PROSITE" id="PS01242">
    <property type="entry name" value="ZF_FPG_1"/>
    <property type="match status" value="1"/>
</dbReference>
<dbReference type="PROSITE" id="PS51066">
    <property type="entry name" value="ZF_FPG_2"/>
    <property type="match status" value="1"/>
</dbReference>
<proteinExistence type="inferred from homology"/>
<accession>Q8NNV7</accession>
<reference key="1">
    <citation type="journal article" date="2003" name="Appl. Microbiol. Biotechnol.">
        <title>The Corynebacterium glutamicum genome: features and impacts on biotechnological processes.</title>
        <authorList>
            <person name="Ikeda M."/>
            <person name="Nakagawa S."/>
        </authorList>
    </citation>
    <scope>NUCLEOTIDE SEQUENCE [LARGE SCALE GENOMIC DNA]</scope>
    <source>
        <strain>ATCC 13032 / DSM 20300 / JCM 1318 / BCRC 11384 / CCUG 27702 / LMG 3730 / NBRC 12168 / NCIMB 10025 / NRRL B-2784 / 534</strain>
    </source>
</reference>
<reference key="2">
    <citation type="journal article" date="2003" name="J. Biotechnol.">
        <title>The complete Corynebacterium glutamicum ATCC 13032 genome sequence and its impact on the production of L-aspartate-derived amino acids and vitamins.</title>
        <authorList>
            <person name="Kalinowski J."/>
            <person name="Bathe B."/>
            <person name="Bartels D."/>
            <person name="Bischoff N."/>
            <person name="Bott M."/>
            <person name="Burkovski A."/>
            <person name="Dusch N."/>
            <person name="Eggeling L."/>
            <person name="Eikmanns B.J."/>
            <person name="Gaigalat L."/>
            <person name="Goesmann A."/>
            <person name="Hartmann M."/>
            <person name="Huthmacher K."/>
            <person name="Kraemer R."/>
            <person name="Linke B."/>
            <person name="McHardy A.C."/>
            <person name="Meyer F."/>
            <person name="Moeckel B."/>
            <person name="Pfefferle W."/>
            <person name="Puehler A."/>
            <person name="Rey D.A."/>
            <person name="Rueckert C."/>
            <person name="Rupp O."/>
            <person name="Sahm H."/>
            <person name="Wendisch V.F."/>
            <person name="Wiegraebe I."/>
            <person name="Tauch A."/>
        </authorList>
    </citation>
    <scope>NUCLEOTIDE SEQUENCE [LARGE SCALE GENOMIC DNA]</scope>
    <source>
        <strain>ATCC 13032 / DSM 20300 / JCM 1318 / BCRC 11384 / CCUG 27702 / LMG 3730 / NBRC 12168 / NCIMB 10025 / NRRL B-2784 / 534</strain>
    </source>
</reference>